<name>SZRD1_RAT</name>
<accession>Q5XIA2</accession>
<organism>
    <name type="scientific">Rattus norvegicus</name>
    <name type="common">Rat</name>
    <dbReference type="NCBI Taxonomy" id="10116"/>
    <lineage>
        <taxon>Eukaryota</taxon>
        <taxon>Metazoa</taxon>
        <taxon>Chordata</taxon>
        <taxon>Craniata</taxon>
        <taxon>Vertebrata</taxon>
        <taxon>Euteleostomi</taxon>
        <taxon>Mammalia</taxon>
        <taxon>Eutheria</taxon>
        <taxon>Euarchontoglires</taxon>
        <taxon>Glires</taxon>
        <taxon>Rodentia</taxon>
        <taxon>Myomorpha</taxon>
        <taxon>Muroidea</taxon>
        <taxon>Muridae</taxon>
        <taxon>Murinae</taxon>
        <taxon>Rattus</taxon>
    </lineage>
</organism>
<protein>
    <recommendedName>
        <fullName>SUZ RNA-binding domain-containing</fullName>
        <shortName>SUZ domain-containing protein 1</shortName>
    </recommendedName>
</protein>
<reference key="1">
    <citation type="journal article" date="2004" name="Nature">
        <title>Genome sequence of the Brown Norway rat yields insights into mammalian evolution.</title>
        <authorList>
            <person name="Gibbs R.A."/>
            <person name="Weinstock G.M."/>
            <person name="Metzker M.L."/>
            <person name="Muzny D.M."/>
            <person name="Sodergren E.J."/>
            <person name="Scherer S."/>
            <person name="Scott G."/>
            <person name="Steffen D."/>
            <person name="Worley K.C."/>
            <person name="Burch P.E."/>
            <person name="Okwuonu G."/>
            <person name="Hines S."/>
            <person name="Lewis L."/>
            <person name="Deramo C."/>
            <person name="Delgado O."/>
            <person name="Dugan-Rocha S."/>
            <person name="Miner G."/>
            <person name="Morgan M."/>
            <person name="Hawes A."/>
            <person name="Gill R."/>
            <person name="Holt R.A."/>
            <person name="Adams M.D."/>
            <person name="Amanatides P.G."/>
            <person name="Baden-Tillson H."/>
            <person name="Barnstead M."/>
            <person name="Chin S."/>
            <person name="Evans C.A."/>
            <person name="Ferriera S."/>
            <person name="Fosler C."/>
            <person name="Glodek A."/>
            <person name="Gu Z."/>
            <person name="Jennings D."/>
            <person name="Kraft C.L."/>
            <person name="Nguyen T."/>
            <person name="Pfannkoch C.M."/>
            <person name="Sitter C."/>
            <person name="Sutton G.G."/>
            <person name="Venter J.C."/>
            <person name="Woodage T."/>
            <person name="Smith D."/>
            <person name="Lee H.-M."/>
            <person name="Gustafson E."/>
            <person name="Cahill P."/>
            <person name="Kana A."/>
            <person name="Doucette-Stamm L."/>
            <person name="Weinstock K."/>
            <person name="Fechtel K."/>
            <person name="Weiss R.B."/>
            <person name="Dunn D.M."/>
            <person name="Green E.D."/>
            <person name="Blakesley R.W."/>
            <person name="Bouffard G.G."/>
            <person name="De Jong P.J."/>
            <person name="Osoegawa K."/>
            <person name="Zhu B."/>
            <person name="Marra M."/>
            <person name="Schein J."/>
            <person name="Bosdet I."/>
            <person name="Fjell C."/>
            <person name="Jones S."/>
            <person name="Krzywinski M."/>
            <person name="Mathewson C."/>
            <person name="Siddiqui A."/>
            <person name="Wye N."/>
            <person name="McPherson J."/>
            <person name="Zhao S."/>
            <person name="Fraser C.M."/>
            <person name="Shetty J."/>
            <person name="Shatsman S."/>
            <person name="Geer K."/>
            <person name="Chen Y."/>
            <person name="Abramzon S."/>
            <person name="Nierman W.C."/>
            <person name="Havlak P.H."/>
            <person name="Chen R."/>
            <person name="Durbin K.J."/>
            <person name="Egan A."/>
            <person name="Ren Y."/>
            <person name="Song X.-Z."/>
            <person name="Li B."/>
            <person name="Liu Y."/>
            <person name="Qin X."/>
            <person name="Cawley S."/>
            <person name="Cooney A.J."/>
            <person name="D'Souza L.M."/>
            <person name="Martin K."/>
            <person name="Wu J.Q."/>
            <person name="Gonzalez-Garay M.L."/>
            <person name="Jackson A.R."/>
            <person name="Kalafus K.J."/>
            <person name="McLeod M.P."/>
            <person name="Milosavljevic A."/>
            <person name="Virk D."/>
            <person name="Volkov A."/>
            <person name="Wheeler D.A."/>
            <person name="Zhang Z."/>
            <person name="Bailey J.A."/>
            <person name="Eichler E.E."/>
            <person name="Tuzun E."/>
            <person name="Birney E."/>
            <person name="Mongin E."/>
            <person name="Ureta-Vidal A."/>
            <person name="Woodwark C."/>
            <person name="Zdobnov E."/>
            <person name="Bork P."/>
            <person name="Suyama M."/>
            <person name="Torrents D."/>
            <person name="Alexandersson M."/>
            <person name="Trask B.J."/>
            <person name="Young J.M."/>
            <person name="Huang H."/>
            <person name="Wang H."/>
            <person name="Xing H."/>
            <person name="Daniels S."/>
            <person name="Gietzen D."/>
            <person name="Schmidt J."/>
            <person name="Stevens K."/>
            <person name="Vitt U."/>
            <person name="Wingrove J."/>
            <person name="Camara F."/>
            <person name="Mar Alba M."/>
            <person name="Abril J.F."/>
            <person name="Guigo R."/>
            <person name="Smit A."/>
            <person name="Dubchak I."/>
            <person name="Rubin E.M."/>
            <person name="Couronne O."/>
            <person name="Poliakov A."/>
            <person name="Huebner N."/>
            <person name="Ganten D."/>
            <person name="Goesele C."/>
            <person name="Hummel O."/>
            <person name="Kreitler T."/>
            <person name="Lee Y.-A."/>
            <person name="Monti J."/>
            <person name="Schulz H."/>
            <person name="Zimdahl H."/>
            <person name="Himmelbauer H."/>
            <person name="Lehrach H."/>
            <person name="Jacob H.J."/>
            <person name="Bromberg S."/>
            <person name="Gullings-Handley J."/>
            <person name="Jensen-Seaman M.I."/>
            <person name="Kwitek A.E."/>
            <person name="Lazar J."/>
            <person name="Pasko D."/>
            <person name="Tonellato P.J."/>
            <person name="Twigger S."/>
            <person name="Ponting C.P."/>
            <person name="Duarte J.M."/>
            <person name="Rice S."/>
            <person name="Goodstadt L."/>
            <person name="Beatson S.A."/>
            <person name="Emes R.D."/>
            <person name="Winter E.E."/>
            <person name="Webber C."/>
            <person name="Brandt P."/>
            <person name="Nyakatura G."/>
            <person name="Adetobi M."/>
            <person name="Chiaromonte F."/>
            <person name="Elnitski L."/>
            <person name="Eswara P."/>
            <person name="Hardison R.C."/>
            <person name="Hou M."/>
            <person name="Kolbe D."/>
            <person name="Makova K."/>
            <person name="Miller W."/>
            <person name="Nekrutenko A."/>
            <person name="Riemer C."/>
            <person name="Schwartz S."/>
            <person name="Taylor J."/>
            <person name="Yang S."/>
            <person name="Zhang Y."/>
            <person name="Lindpaintner K."/>
            <person name="Andrews T.D."/>
            <person name="Caccamo M."/>
            <person name="Clamp M."/>
            <person name="Clarke L."/>
            <person name="Curwen V."/>
            <person name="Durbin R.M."/>
            <person name="Eyras E."/>
            <person name="Searle S.M."/>
            <person name="Cooper G.M."/>
            <person name="Batzoglou S."/>
            <person name="Brudno M."/>
            <person name="Sidow A."/>
            <person name="Stone E.A."/>
            <person name="Payseur B.A."/>
            <person name="Bourque G."/>
            <person name="Lopez-Otin C."/>
            <person name="Puente X.S."/>
            <person name="Chakrabarti K."/>
            <person name="Chatterji S."/>
            <person name="Dewey C."/>
            <person name="Pachter L."/>
            <person name="Bray N."/>
            <person name="Yap V.B."/>
            <person name="Caspi A."/>
            <person name="Tesler G."/>
            <person name="Pevzner P.A."/>
            <person name="Haussler D."/>
            <person name="Roskin K.M."/>
            <person name="Baertsch R."/>
            <person name="Clawson H."/>
            <person name="Furey T.S."/>
            <person name="Hinrichs A.S."/>
            <person name="Karolchik D."/>
            <person name="Kent W.J."/>
            <person name="Rosenbloom K.R."/>
            <person name="Trumbower H."/>
            <person name="Weirauch M."/>
            <person name="Cooper D.N."/>
            <person name="Stenson P.D."/>
            <person name="Ma B."/>
            <person name="Brent M."/>
            <person name="Arumugam M."/>
            <person name="Shteynberg D."/>
            <person name="Copley R.R."/>
            <person name="Taylor M.S."/>
            <person name="Riethman H."/>
            <person name="Mudunuri U."/>
            <person name="Peterson J."/>
            <person name="Guyer M."/>
            <person name="Felsenfeld A."/>
            <person name="Old S."/>
            <person name="Mockrin S."/>
            <person name="Collins F.S."/>
        </authorList>
    </citation>
    <scope>NUCLEOTIDE SEQUENCE [LARGE SCALE GENOMIC DNA]</scope>
    <source>
        <strain>Brown Norway</strain>
    </source>
</reference>
<reference key="2">
    <citation type="journal article" date="2004" name="Genome Res.">
        <title>The status, quality, and expansion of the NIH full-length cDNA project: the Mammalian Gene Collection (MGC).</title>
        <authorList>
            <consortium name="The MGC Project Team"/>
        </authorList>
    </citation>
    <scope>NUCLEOTIDE SEQUENCE [LARGE SCALE MRNA] OF 2-152 (ISOFORM 2)</scope>
    <source>
        <tissue>Lung</tissue>
    </source>
</reference>
<reference key="3">
    <citation type="journal article" date="2012" name="Nat. Commun.">
        <title>Quantitative maps of protein phosphorylation sites across 14 different rat organs and tissues.</title>
        <authorList>
            <person name="Lundby A."/>
            <person name="Secher A."/>
            <person name="Lage K."/>
            <person name="Nordsborg N.B."/>
            <person name="Dmytriyev A."/>
            <person name="Lundby C."/>
            <person name="Olsen J.V."/>
        </authorList>
    </citation>
    <scope>PHOSPHORYLATION [LARGE SCALE ANALYSIS] AT SER-107</scope>
    <scope>IDENTIFICATION BY MASS SPECTROMETRY [LARGE SCALE ANALYSIS]</scope>
</reference>
<sequence length="152" mass="16998">MEDEEVAESWEEAADSGEIDRRLEKKLKITQKESRKSKSPPKVPIVIQDDSLPTGPPPQIRILKRPTSNGVVSSPNSTSRPALPVKSLAQREAEYAEARRRILGSASPEEEQEKPILDRPTRISQPEDSRQPSNVIRQPLGPDGSQGFKQRR</sequence>
<comment type="alternative products">
    <event type="alternative splicing"/>
    <isoform>
        <id>Q5XIA2-1</id>
        <name>1</name>
        <sequence type="displayed"/>
    </isoform>
    <isoform>
        <id>Q5XIA2-2</id>
        <name>2</name>
        <sequence type="described" ref="VSP_028000 VSP_028001"/>
    </isoform>
</comment>
<comment type="similarity">
    <text evidence="6">Belongs to the SZRD1 family.</text>
</comment>
<feature type="chain" id="PRO_0000303071" description="SUZ RNA-binding domain-containing">
    <location>
        <begin position="1"/>
        <end position="152"/>
    </location>
</feature>
<feature type="domain" description="SUZ" evidence="2">
    <location>
        <begin position="42"/>
        <end position="107"/>
    </location>
</feature>
<feature type="domain" description="SUZ-C" evidence="3">
    <location>
        <begin position="111"/>
        <end position="152"/>
    </location>
</feature>
<feature type="region of interest" description="Disordered" evidence="4">
    <location>
        <begin position="30"/>
        <end position="152"/>
    </location>
</feature>
<feature type="compositionally biased region" description="Polar residues" evidence="4">
    <location>
        <begin position="66"/>
        <end position="80"/>
    </location>
</feature>
<feature type="compositionally biased region" description="Basic and acidic residues" evidence="4">
    <location>
        <begin position="89"/>
        <end position="100"/>
    </location>
</feature>
<feature type="compositionally biased region" description="Basic and acidic residues" evidence="4">
    <location>
        <begin position="113"/>
        <end position="130"/>
    </location>
</feature>
<feature type="modified residue" description="N-acetylmethionine" evidence="1">
    <location>
        <position position="1"/>
    </location>
</feature>
<feature type="modified residue" description="Phosphoserine" evidence="1">
    <location>
        <position position="37"/>
    </location>
</feature>
<feature type="modified residue" description="Phosphoserine" evidence="1">
    <location>
        <position position="39"/>
    </location>
</feature>
<feature type="modified residue" description="Phosphoserine" evidence="1">
    <location>
        <position position="51"/>
    </location>
</feature>
<feature type="modified residue" description="Phosphoserine" evidence="1">
    <location>
        <position position="105"/>
    </location>
</feature>
<feature type="modified residue" description="Phosphoserine" evidence="7">
    <location>
        <position position="107"/>
    </location>
</feature>
<feature type="splice variant" id="VSP_028000" description="In isoform 2." evidence="5">
    <location>
        <position position="34"/>
    </location>
</feature>
<feature type="splice variant" id="VSP_028001" description="In isoform 2." evidence="5">
    <original>RPTRISQPEDSRQPSNVIRQPLGPDGSQGFKQRR</original>
    <variation>SLHLSGVGKSISFCLL</variation>
    <location>
        <begin position="119"/>
        <end position="152"/>
    </location>
</feature>
<dbReference type="EMBL" id="AABR03040353">
    <property type="status" value="NOT_ANNOTATED_CDS"/>
    <property type="molecule type" value="Genomic_DNA"/>
</dbReference>
<dbReference type="EMBL" id="BC083784">
    <property type="protein sequence ID" value="AAH83784.1"/>
    <property type="molecule type" value="mRNA"/>
</dbReference>
<dbReference type="RefSeq" id="NP_001108071.1">
    <molecule id="Q5XIA2-1"/>
    <property type="nucleotide sequence ID" value="NM_001114599.2"/>
</dbReference>
<dbReference type="FunCoup" id="Q5XIA2">
    <property type="interactions" value="2354"/>
</dbReference>
<dbReference type="STRING" id="10116.ENSRNOP00000048348"/>
<dbReference type="iPTMnet" id="Q5XIA2"/>
<dbReference type="PhosphoSitePlus" id="Q5XIA2"/>
<dbReference type="PaxDb" id="10116-ENSRNOP00000048348"/>
<dbReference type="Ensembl" id="ENSRNOT00000045226.6">
    <molecule id="Q5XIA2-1"/>
    <property type="protein sequence ID" value="ENSRNOP00000048348.3"/>
    <property type="gene ID" value="ENSRNOG00000009183.9"/>
</dbReference>
<dbReference type="GeneID" id="500575"/>
<dbReference type="KEGG" id="rno:500575"/>
<dbReference type="UCSC" id="RGD:1560286">
    <molecule id="Q5XIA2-1"/>
    <property type="organism name" value="rat"/>
</dbReference>
<dbReference type="AGR" id="RGD:1560286"/>
<dbReference type="CTD" id="26099"/>
<dbReference type="RGD" id="1560286">
    <property type="gene designation" value="Szrd1"/>
</dbReference>
<dbReference type="eggNOG" id="ENOG502RZH5">
    <property type="taxonomic scope" value="Eukaryota"/>
</dbReference>
<dbReference type="GeneTree" id="ENSGT00390000005532"/>
<dbReference type="HOGENOM" id="CLU_120658_0_0_1"/>
<dbReference type="InParanoid" id="Q5XIA2"/>
<dbReference type="OMA" id="PACMSVQ"/>
<dbReference type="OrthoDB" id="5373615at2759"/>
<dbReference type="PhylomeDB" id="Q5XIA2"/>
<dbReference type="TreeFam" id="TF324643"/>
<dbReference type="PRO" id="PR:Q5XIA2"/>
<dbReference type="Proteomes" id="UP000002494">
    <property type="component" value="Chromosome 5"/>
</dbReference>
<dbReference type="Bgee" id="ENSRNOG00000009183">
    <property type="expression patterns" value="Expressed in skeletal muscle tissue and 19 other cell types or tissues"/>
</dbReference>
<dbReference type="InterPro" id="IPR024771">
    <property type="entry name" value="SUZ"/>
</dbReference>
<dbReference type="InterPro" id="IPR024642">
    <property type="entry name" value="SUZ-C"/>
</dbReference>
<dbReference type="InterPro" id="IPR039228">
    <property type="entry name" value="SZRD1"/>
</dbReference>
<dbReference type="PANTHER" id="PTHR31796">
    <property type="entry name" value="SUZ DOMAIN-CONTAINING PROTEIN 1"/>
    <property type="match status" value="1"/>
</dbReference>
<dbReference type="PANTHER" id="PTHR31796:SF2">
    <property type="entry name" value="SUZ DOMAIN-CONTAINING PROTEIN 1"/>
    <property type="match status" value="1"/>
</dbReference>
<dbReference type="Pfam" id="PF12752">
    <property type="entry name" value="SUZ"/>
    <property type="match status" value="1"/>
</dbReference>
<dbReference type="Pfam" id="PF12901">
    <property type="entry name" value="SUZ-C"/>
    <property type="match status" value="1"/>
</dbReference>
<dbReference type="PROSITE" id="PS51673">
    <property type="entry name" value="SUZ"/>
    <property type="match status" value="1"/>
</dbReference>
<dbReference type="PROSITE" id="PS51938">
    <property type="entry name" value="SUZ_C"/>
    <property type="match status" value="1"/>
</dbReference>
<keyword id="KW-0007">Acetylation</keyword>
<keyword id="KW-0025">Alternative splicing</keyword>
<keyword id="KW-0597">Phosphoprotein</keyword>
<keyword id="KW-1185">Reference proteome</keyword>
<gene>
    <name type="primary">Szrd1</name>
</gene>
<evidence type="ECO:0000250" key="1">
    <source>
        <dbReference type="UniProtKB" id="Q7Z422"/>
    </source>
</evidence>
<evidence type="ECO:0000255" key="2">
    <source>
        <dbReference type="PROSITE-ProRule" id="PRU01009"/>
    </source>
</evidence>
<evidence type="ECO:0000255" key="3">
    <source>
        <dbReference type="PROSITE-ProRule" id="PRU01287"/>
    </source>
</evidence>
<evidence type="ECO:0000256" key="4">
    <source>
        <dbReference type="SAM" id="MobiDB-lite"/>
    </source>
</evidence>
<evidence type="ECO:0000303" key="5">
    <source>
    </source>
</evidence>
<evidence type="ECO:0000305" key="6"/>
<evidence type="ECO:0007744" key="7">
    <source>
    </source>
</evidence>
<proteinExistence type="evidence at protein level"/>